<comment type="function">
    <text evidence="1">ATP-dependent microtubule severing protein. Severs microtubules along their length and depolymerizes their ends, primarily the minus-end, suppressing microtubule growth from and attachment to centrosomes. Microtubule severing may promote rapid reorganization of cellular microtubule arrays and the release of microtubules from the centrosome following nucleation. Microtubule release from the mitotic spindle poles may allow depolymerization of the microtubule end proximal to the spindle pole, leading to poleward microtubule flux and poleward motion of chromosome (By similarity).</text>
</comment>
<comment type="subunit">
    <text evidence="6">Interacts with AKAP8 (via C-terminus).</text>
</comment>
<comment type="interaction">
    <interactant intactId="EBI-11111349">
        <id>Q9ERZ6</id>
    </interactant>
    <interactant intactId="EBI-4285802">
        <id>Q9DBR0</id>
        <label>Akap8</label>
    </interactant>
    <organismsDiffer>false</organismsDiffer>
    <experiments>4</experiments>
</comment>
<comment type="subcellular location">
    <subcellularLocation>
        <location evidence="6">Nucleus matrix</location>
    </subcellularLocation>
    <subcellularLocation>
        <location evidence="1">Cytoplasm</location>
        <location evidence="1">Cytoskeleton</location>
        <location evidence="1">Microtubule organizing center</location>
        <location evidence="1">Centrosome</location>
    </subcellularLocation>
    <text evidence="1">Localizes to centrosomes throughout mitosis and to the spindle midzone during telophase.</text>
</comment>
<comment type="alternative products">
    <event type="alternative splicing"/>
    <isoform>
        <id>Q9ERZ6-1</id>
        <name>1</name>
        <sequence type="displayed"/>
    </isoform>
    <isoform>
        <id>Q9ERZ6-2</id>
        <name>2</name>
        <sequence type="described" ref="VSP_020731"/>
    </isoform>
</comment>
<comment type="tissue specificity">
    <text evidence="5">Widely expressed.</text>
</comment>
<comment type="developmental stage">
    <text evidence="5">Expression begins in the embryo at 8.5 dpc. Oocyst, optic cup and pelvic anlage show strongest expression. At 10.5 dpc, expression concentrated in epithelial cells of the dorso-lateral, posterior and anterior otocyst wall. Expression in the eye is found fairly evenly throughout the retinal neural epithelium, with some enrichment in the inner retina where cells begin their differentiation to form retinal ganglion cells. Some expression is seen in the lens pit and in the cell layer that will become the pigment epithelium. At 11.5 dpc, when the superior semicircular canal has begun to form from the posterior otocyst, much of the expression is concentrated there, although there is also expression in the part of the otocyst that will form the lateral or horizontal canal. Strong expression was also seen in the acoustic ganglia and cochlea. In the eye the expression pattern is similar to that found in 10.5 dpc except that expression is concentrated in the retinal ganglion layer. As the lens vesicle forms and matures at 13 dpc, expression is also seen in the anterior wall of the lens, but persists throughout the neural retina, especially in the peripheral retina where cells are still differentiating.</text>
</comment>
<comment type="disease">
    <text evidence="5">Defects in Fign are characterized by a side-to-side head-shaking and circling behavior, due to reduced or absent semicircular canals. Diseased mice also have small eyes, associated with cell-cycle delay and insufficient growth of the retinal neural epithelium, and lower penetrance skeletal abnormalities, including pelvic girdle dysgenesis, skull bone fusions and polydactyly.</text>
</comment>
<comment type="disruption phenotype">
    <text evidence="6">FIGN and AKAP8 double mutant mice die soon after birth due to cleft palate.</text>
</comment>
<comment type="similarity">
    <text evidence="10">Belongs to the AAA ATPase family.</text>
</comment>
<gene>
    <name type="primary">Fign</name>
</gene>
<accession>Q9ERZ6</accession>
<accession>Q3TPB0</accession>
<accession>Q3UP57</accession>
<accession>Q6PCM0</accession>
<sequence length="759" mass="82098">MISSTSVYGLKMQWTPEHAQWPEQHFDITSTTRSPAHKVEAYRGHLQRTYQYAWANDDISALTASNLLKKYAEKYSGILEGPVDRPVLSNYSDTPSGLVNGRKNDSEPWQPSLNSEAVYPMNCVPDVITASKAGVSSALPPVDVSASIGSSPGVASNLTEPSYSSSTCGSHTVPSLHAGLPSQEYAPGYNGSYLHSTYSSQATPALPSPHPSPLHSSGLLQPPPPPPPPPALVPGYNGTSNLSSYSYPSASYPPQTAVGSGYSPGGAPPPPSAYLPSGIPAPTPLPPTTVPGYTYQGHGLTPIAPSALTNNSASSLKRKAFYMAGQGDMDSSYGNYSYGQQRSTQSPMYRMPDNSISNSNRGNGFDRNAETSSLAFKPTKQLMPSEQQRKFSSQSSRALTPPSYSTAKNSLGSRSSESFGKYTSPVMSEHGDDHRQLLAHPIQGPGLRAATSSNHSVDEQLKNTDTHLIDLVTNEIITQGPPVDWSDIAGLDLVKAVIKEEVLWPVLRSDAFSGLTALPRSILLFGPRGTGKTLLGRCIASQLGATFFKIAGSGLVAKWIGEAEKIIHASFLVARCRQPSVIFVSDIDMLLSSQVSEEHSPVSRMRTEFLMQLDTVLTSAEDQIVVICATSKPEEIDESLRRYFMKRLLIPLPDSTARHQIIVQLLTQHNYCLNDKEFALLVQRTEGFSGLDVAHLCQEAAVGPLHAMPATDLSAIMPSQLRPVTYQDFENAFCKIQPSISQKELDMYVEWNKMFGCSQ</sequence>
<name>FIGN_MOUSE</name>
<organism>
    <name type="scientific">Mus musculus</name>
    <name type="common">Mouse</name>
    <dbReference type="NCBI Taxonomy" id="10090"/>
    <lineage>
        <taxon>Eukaryota</taxon>
        <taxon>Metazoa</taxon>
        <taxon>Chordata</taxon>
        <taxon>Craniata</taxon>
        <taxon>Vertebrata</taxon>
        <taxon>Euteleostomi</taxon>
        <taxon>Mammalia</taxon>
        <taxon>Eutheria</taxon>
        <taxon>Euarchontoglires</taxon>
        <taxon>Glires</taxon>
        <taxon>Rodentia</taxon>
        <taxon>Myomorpha</taxon>
        <taxon>Muroidea</taxon>
        <taxon>Muridae</taxon>
        <taxon>Murinae</taxon>
        <taxon>Mus</taxon>
        <taxon>Mus</taxon>
    </lineage>
</organism>
<keyword id="KW-0025">Alternative splicing</keyword>
<keyword id="KW-0067">ATP-binding</keyword>
<keyword id="KW-0131">Cell cycle</keyword>
<keyword id="KW-0132">Cell division</keyword>
<keyword id="KW-0963">Cytoplasm</keyword>
<keyword id="KW-0206">Cytoskeleton</keyword>
<keyword id="KW-0493">Microtubule</keyword>
<keyword id="KW-0498">Mitosis</keyword>
<keyword id="KW-0547">Nucleotide-binding</keyword>
<keyword id="KW-0539">Nucleus</keyword>
<keyword id="KW-0597">Phosphoprotein</keyword>
<keyword id="KW-1185">Reference proteome</keyword>
<evidence type="ECO:0000250" key="1"/>
<evidence type="ECO:0000250" key="2">
    <source>
        <dbReference type="UniProtKB" id="Q5HY92"/>
    </source>
</evidence>
<evidence type="ECO:0000250" key="3">
    <source>
        <dbReference type="UniProtKB" id="Q6PIW4"/>
    </source>
</evidence>
<evidence type="ECO:0000256" key="4">
    <source>
        <dbReference type="SAM" id="MobiDB-lite"/>
    </source>
</evidence>
<evidence type="ECO:0000269" key="5">
    <source>
    </source>
</evidence>
<evidence type="ECO:0000269" key="6">
    <source>
    </source>
</evidence>
<evidence type="ECO:0000303" key="7">
    <source>
    </source>
</evidence>
<evidence type="ECO:0000303" key="8">
    <source>
    </source>
</evidence>
<evidence type="ECO:0000303" key="9">
    <source>
    </source>
</evidence>
<evidence type="ECO:0000305" key="10"/>
<feature type="chain" id="PRO_0000250749" description="Fidgetin">
    <location>
        <begin position="1"/>
        <end position="759"/>
    </location>
</feature>
<feature type="region of interest" description="Disordered" evidence="4">
    <location>
        <begin position="89"/>
        <end position="111"/>
    </location>
</feature>
<feature type="region of interest" description="Disordered" evidence="4">
    <location>
        <begin position="200"/>
        <end position="237"/>
    </location>
</feature>
<feature type="region of interest" description="Disordered" evidence="4">
    <location>
        <begin position="258"/>
        <end position="293"/>
    </location>
</feature>
<feature type="region of interest" description="Disordered" evidence="4">
    <location>
        <begin position="337"/>
        <end position="429"/>
    </location>
</feature>
<feature type="compositionally biased region" description="Pro residues" evidence="4">
    <location>
        <begin position="221"/>
        <end position="232"/>
    </location>
</feature>
<feature type="compositionally biased region" description="Pro residues" evidence="4">
    <location>
        <begin position="266"/>
        <end position="289"/>
    </location>
</feature>
<feature type="compositionally biased region" description="Polar residues" evidence="4">
    <location>
        <begin position="337"/>
        <end position="347"/>
    </location>
</feature>
<feature type="compositionally biased region" description="Polar residues" evidence="4">
    <location>
        <begin position="382"/>
        <end position="418"/>
    </location>
</feature>
<feature type="binding site" evidence="3">
    <location>
        <position position="489"/>
    </location>
    <ligand>
        <name>ATP</name>
        <dbReference type="ChEBI" id="CHEBI:30616"/>
    </ligand>
</feature>
<feature type="binding site" evidence="3">
    <location>
        <begin position="529"/>
        <end position="534"/>
    </location>
    <ligand>
        <name>ATP</name>
        <dbReference type="ChEBI" id="CHEBI:30616"/>
    </ligand>
</feature>
<feature type="modified residue" description="Phosphothreonine" evidence="2">
    <location>
        <position position="400"/>
    </location>
</feature>
<feature type="splice variant" id="VSP_020731" description="In isoform 2." evidence="7 8 9">
    <location>
        <begin position="1"/>
        <end position="11"/>
    </location>
</feature>
<feature type="sequence conflict" description="In Ref. 3; AAH59266." evidence="10" ref="3">
    <original>SQ</original>
    <variation>IP</variation>
    <location>
        <begin position="200"/>
        <end position="201"/>
    </location>
</feature>
<feature type="sequence conflict" description="In Ref. 2; BAE25540." evidence="10" ref="2">
    <original>A</original>
    <variation>V</variation>
    <location>
        <position position="320"/>
    </location>
</feature>
<feature type="sequence conflict" description="In Ref. 2; BAE25540." evidence="10" ref="2">
    <original>H</original>
    <variation>R</variation>
    <location>
        <position position="455"/>
    </location>
</feature>
<proteinExistence type="evidence at protein level"/>
<reference key="1">
    <citation type="journal article" date="2000" name="Nat. Genet.">
        <title>The mouse fidgetin gene defines a new role for AAA family proteins in mammalian development.</title>
        <authorList>
            <person name="Cox G.A."/>
            <person name="Mahaffey C.L."/>
            <person name="Nystuen A."/>
            <person name="Letts V.A."/>
            <person name="Frankel W.N."/>
        </authorList>
    </citation>
    <scope>NUCLEOTIDE SEQUENCE [MRNA] (ISOFORMS 1 AND 2)</scope>
    <scope>DISEASE</scope>
    <scope>TISSUE SPECIFICITY</scope>
    <scope>DEVELOPMENTAL STAGE</scope>
    <source>
        <strain>EL/Suz</strain>
    </source>
</reference>
<reference key="2">
    <citation type="journal article" date="2005" name="Science">
        <title>The transcriptional landscape of the mammalian genome.</title>
        <authorList>
            <person name="Carninci P."/>
            <person name="Kasukawa T."/>
            <person name="Katayama S."/>
            <person name="Gough J."/>
            <person name="Frith M.C."/>
            <person name="Maeda N."/>
            <person name="Oyama R."/>
            <person name="Ravasi T."/>
            <person name="Lenhard B."/>
            <person name="Wells C."/>
            <person name="Kodzius R."/>
            <person name="Shimokawa K."/>
            <person name="Bajic V.B."/>
            <person name="Brenner S.E."/>
            <person name="Batalov S."/>
            <person name="Forrest A.R."/>
            <person name="Zavolan M."/>
            <person name="Davis M.J."/>
            <person name="Wilming L.G."/>
            <person name="Aidinis V."/>
            <person name="Allen J.E."/>
            <person name="Ambesi-Impiombato A."/>
            <person name="Apweiler R."/>
            <person name="Aturaliya R.N."/>
            <person name="Bailey T.L."/>
            <person name="Bansal M."/>
            <person name="Baxter L."/>
            <person name="Beisel K.W."/>
            <person name="Bersano T."/>
            <person name="Bono H."/>
            <person name="Chalk A.M."/>
            <person name="Chiu K.P."/>
            <person name="Choudhary V."/>
            <person name="Christoffels A."/>
            <person name="Clutterbuck D.R."/>
            <person name="Crowe M.L."/>
            <person name="Dalla E."/>
            <person name="Dalrymple B.P."/>
            <person name="de Bono B."/>
            <person name="Della Gatta G."/>
            <person name="di Bernardo D."/>
            <person name="Down T."/>
            <person name="Engstrom P."/>
            <person name="Fagiolini M."/>
            <person name="Faulkner G."/>
            <person name="Fletcher C.F."/>
            <person name="Fukushima T."/>
            <person name="Furuno M."/>
            <person name="Futaki S."/>
            <person name="Gariboldi M."/>
            <person name="Georgii-Hemming P."/>
            <person name="Gingeras T.R."/>
            <person name="Gojobori T."/>
            <person name="Green R.E."/>
            <person name="Gustincich S."/>
            <person name="Harbers M."/>
            <person name="Hayashi Y."/>
            <person name="Hensch T.K."/>
            <person name="Hirokawa N."/>
            <person name="Hill D."/>
            <person name="Huminiecki L."/>
            <person name="Iacono M."/>
            <person name="Ikeo K."/>
            <person name="Iwama A."/>
            <person name="Ishikawa T."/>
            <person name="Jakt M."/>
            <person name="Kanapin A."/>
            <person name="Katoh M."/>
            <person name="Kawasawa Y."/>
            <person name="Kelso J."/>
            <person name="Kitamura H."/>
            <person name="Kitano H."/>
            <person name="Kollias G."/>
            <person name="Krishnan S.P."/>
            <person name="Kruger A."/>
            <person name="Kummerfeld S.K."/>
            <person name="Kurochkin I.V."/>
            <person name="Lareau L.F."/>
            <person name="Lazarevic D."/>
            <person name="Lipovich L."/>
            <person name="Liu J."/>
            <person name="Liuni S."/>
            <person name="McWilliam S."/>
            <person name="Madan Babu M."/>
            <person name="Madera M."/>
            <person name="Marchionni L."/>
            <person name="Matsuda H."/>
            <person name="Matsuzawa S."/>
            <person name="Miki H."/>
            <person name="Mignone F."/>
            <person name="Miyake S."/>
            <person name="Morris K."/>
            <person name="Mottagui-Tabar S."/>
            <person name="Mulder N."/>
            <person name="Nakano N."/>
            <person name="Nakauchi H."/>
            <person name="Ng P."/>
            <person name="Nilsson R."/>
            <person name="Nishiguchi S."/>
            <person name="Nishikawa S."/>
            <person name="Nori F."/>
            <person name="Ohara O."/>
            <person name="Okazaki Y."/>
            <person name="Orlando V."/>
            <person name="Pang K.C."/>
            <person name="Pavan W.J."/>
            <person name="Pavesi G."/>
            <person name="Pesole G."/>
            <person name="Petrovsky N."/>
            <person name="Piazza S."/>
            <person name="Reed J."/>
            <person name="Reid J.F."/>
            <person name="Ring B.Z."/>
            <person name="Ringwald M."/>
            <person name="Rost B."/>
            <person name="Ruan Y."/>
            <person name="Salzberg S.L."/>
            <person name="Sandelin A."/>
            <person name="Schneider C."/>
            <person name="Schoenbach C."/>
            <person name="Sekiguchi K."/>
            <person name="Semple C.A."/>
            <person name="Seno S."/>
            <person name="Sessa L."/>
            <person name="Sheng Y."/>
            <person name="Shibata Y."/>
            <person name="Shimada H."/>
            <person name="Shimada K."/>
            <person name="Silva D."/>
            <person name="Sinclair B."/>
            <person name="Sperling S."/>
            <person name="Stupka E."/>
            <person name="Sugiura K."/>
            <person name="Sultana R."/>
            <person name="Takenaka Y."/>
            <person name="Taki K."/>
            <person name="Tammoja K."/>
            <person name="Tan S.L."/>
            <person name="Tang S."/>
            <person name="Taylor M.S."/>
            <person name="Tegner J."/>
            <person name="Teichmann S.A."/>
            <person name="Ueda H.R."/>
            <person name="van Nimwegen E."/>
            <person name="Verardo R."/>
            <person name="Wei C.L."/>
            <person name="Yagi K."/>
            <person name="Yamanishi H."/>
            <person name="Zabarovsky E."/>
            <person name="Zhu S."/>
            <person name="Zimmer A."/>
            <person name="Hide W."/>
            <person name="Bult C."/>
            <person name="Grimmond S.M."/>
            <person name="Teasdale R.D."/>
            <person name="Liu E.T."/>
            <person name="Brusic V."/>
            <person name="Quackenbush J."/>
            <person name="Wahlestedt C."/>
            <person name="Mattick J.S."/>
            <person name="Hume D.A."/>
            <person name="Kai C."/>
            <person name="Sasaki D."/>
            <person name="Tomaru Y."/>
            <person name="Fukuda S."/>
            <person name="Kanamori-Katayama M."/>
            <person name="Suzuki M."/>
            <person name="Aoki J."/>
            <person name="Arakawa T."/>
            <person name="Iida J."/>
            <person name="Imamura K."/>
            <person name="Itoh M."/>
            <person name="Kato T."/>
            <person name="Kawaji H."/>
            <person name="Kawagashira N."/>
            <person name="Kawashima T."/>
            <person name="Kojima M."/>
            <person name="Kondo S."/>
            <person name="Konno H."/>
            <person name="Nakano K."/>
            <person name="Ninomiya N."/>
            <person name="Nishio T."/>
            <person name="Okada M."/>
            <person name="Plessy C."/>
            <person name="Shibata K."/>
            <person name="Shiraki T."/>
            <person name="Suzuki S."/>
            <person name="Tagami M."/>
            <person name="Waki K."/>
            <person name="Watahiki A."/>
            <person name="Okamura-Oho Y."/>
            <person name="Suzuki H."/>
            <person name="Kawai J."/>
            <person name="Hayashizaki Y."/>
        </authorList>
    </citation>
    <scope>NUCLEOTIDE SEQUENCE [LARGE SCALE MRNA] (ISOFORMS 1 AND 2)</scope>
    <source>
        <strain>C57BL/6J</strain>
        <tissue>Corpora quadrigemina</tissue>
        <tissue>Heart</tissue>
        <tissue>Spleen</tissue>
    </source>
</reference>
<reference key="3">
    <citation type="journal article" date="2004" name="Genome Res.">
        <title>The status, quality, and expansion of the NIH full-length cDNA project: the Mammalian Gene Collection (MGC).</title>
        <authorList>
            <consortium name="The MGC Project Team"/>
        </authorList>
    </citation>
    <scope>NUCLEOTIDE SEQUENCE [LARGE SCALE MRNA] (ISOFORM 2)</scope>
    <source>
        <strain>C57BL/6J</strain>
        <tissue>Brain</tissue>
    </source>
</reference>
<reference key="4">
    <citation type="journal article" date="2006" name="J. Biol. Chem.">
        <title>Interaction between fidgetin and protein kinase A-anchoring protein AKAP95 is critical for palatogenesis in the mouse.</title>
        <authorList>
            <person name="Yang Y."/>
            <person name="Mahaffey C.L."/>
            <person name="Berube N."/>
            <person name="Frankel W.N."/>
        </authorList>
    </citation>
    <scope>SUBCELLULAR LOCATION</scope>
    <scope>INTERACTION WITH AKAP8</scope>
    <scope>DISRUPTION PHENOTYPE</scope>
</reference>
<dbReference type="EMBL" id="AF263913">
    <property type="protein sequence ID" value="AAG17289.1"/>
    <property type="molecule type" value="mRNA"/>
</dbReference>
<dbReference type="EMBL" id="AK143787">
    <property type="protein sequence ID" value="BAE25540.1"/>
    <property type="molecule type" value="mRNA"/>
</dbReference>
<dbReference type="EMBL" id="AK163474">
    <property type="protein sequence ID" value="BAE37359.1"/>
    <property type="molecule type" value="mRNA"/>
</dbReference>
<dbReference type="EMBL" id="AK164536">
    <property type="protein sequence ID" value="BAE37827.1"/>
    <property type="molecule type" value="mRNA"/>
</dbReference>
<dbReference type="EMBL" id="BC059266">
    <property type="protein sequence ID" value="AAH59266.1"/>
    <property type="molecule type" value="mRNA"/>
</dbReference>
<dbReference type="CCDS" id="CCDS16070.1">
    <molecule id="Q9ERZ6-1"/>
</dbReference>
<dbReference type="RefSeq" id="NP_001254775.1">
    <molecule id="Q9ERZ6-2"/>
    <property type="nucleotide sequence ID" value="NM_001267846.1"/>
</dbReference>
<dbReference type="RefSeq" id="NP_001254776.1">
    <molecule id="Q9ERZ6-2"/>
    <property type="nucleotide sequence ID" value="NM_001267847.1"/>
</dbReference>
<dbReference type="RefSeq" id="NP_068362.1">
    <molecule id="Q9ERZ6-1"/>
    <property type="nucleotide sequence ID" value="NM_021716.5"/>
</dbReference>
<dbReference type="SMR" id="Q9ERZ6"/>
<dbReference type="BioGRID" id="208552">
    <property type="interactions" value="7"/>
</dbReference>
<dbReference type="FunCoup" id="Q9ERZ6">
    <property type="interactions" value="530"/>
</dbReference>
<dbReference type="IntAct" id="Q9ERZ6">
    <property type="interactions" value="8"/>
</dbReference>
<dbReference type="STRING" id="10090.ENSMUSP00000122855"/>
<dbReference type="GlyGen" id="Q9ERZ6">
    <property type="glycosylation" value="1 site"/>
</dbReference>
<dbReference type="iPTMnet" id="Q9ERZ6"/>
<dbReference type="PhosphoSitePlus" id="Q9ERZ6"/>
<dbReference type="PaxDb" id="10090-ENSMUSP00000122855"/>
<dbReference type="ProteomicsDB" id="267586">
    <molecule id="Q9ERZ6-1"/>
</dbReference>
<dbReference type="ProteomicsDB" id="267587">
    <molecule id="Q9ERZ6-2"/>
</dbReference>
<dbReference type="Antibodypedia" id="47964">
    <property type="antibodies" value="131 antibodies from 17 providers"/>
</dbReference>
<dbReference type="DNASU" id="60344"/>
<dbReference type="Ensembl" id="ENSMUST00000131615.9">
    <molecule id="Q9ERZ6-1"/>
    <property type="protein sequence ID" value="ENSMUSP00000122855.3"/>
    <property type="gene ID" value="ENSMUSG00000075324.14"/>
</dbReference>
<dbReference type="GeneID" id="60344"/>
<dbReference type="KEGG" id="mmu:60344"/>
<dbReference type="UCSC" id="uc008jvv.3">
    <molecule id="Q9ERZ6-1"/>
    <property type="organism name" value="mouse"/>
</dbReference>
<dbReference type="AGR" id="MGI:1890647"/>
<dbReference type="CTD" id="55137"/>
<dbReference type="MGI" id="MGI:1890647">
    <property type="gene designation" value="Fign"/>
</dbReference>
<dbReference type="VEuPathDB" id="HostDB:ENSMUSG00000075324"/>
<dbReference type="eggNOG" id="KOG0740">
    <property type="taxonomic scope" value="Eukaryota"/>
</dbReference>
<dbReference type="GeneTree" id="ENSGT00940000157526"/>
<dbReference type="HOGENOM" id="CLU_000688_21_10_1"/>
<dbReference type="InParanoid" id="Q9ERZ6"/>
<dbReference type="OMA" id="ARCMANQ"/>
<dbReference type="OrthoDB" id="8803010at2759"/>
<dbReference type="PhylomeDB" id="Q9ERZ6"/>
<dbReference type="TreeFam" id="TF105015"/>
<dbReference type="BioGRID-ORCS" id="60344">
    <property type="hits" value="2 hits in 115 CRISPR screens"/>
</dbReference>
<dbReference type="ChiTaRS" id="Fign">
    <property type="organism name" value="mouse"/>
</dbReference>
<dbReference type="PRO" id="PR:Q9ERZ6"/>
<dbReference type="Proteomes" id="UP000000589">
    <property type="component" value="Chromosome 2"/>
</dbReference>
<dbReference type="RNAct" id="Q9ERZ6">
    <property type="molecule type" value="protein"/>
</dbReference>
<dbReference type="Bgee" id="ENSMUSG00000075324">
    <property type="expression patterns" value="Expressed in optic fissure and 187 other cell types or tissues"/>
</dbReference>
<dbReference type="ExpressionAtlas" id="Q9ERZ6">
    <property type="expression patterns" value="baseline and differential"/>
</dbReference>
<dbReference type="GO" id="GO:0005813">
    <property type="term" value="C:centrosome"/>
    <property type="evidence" value="ECO:0007669"/>
    <property type="project" value="UniProtKB-SubCell"/>
</dbReference>
<dbReference type="GO" id="GO:0005737">
    <property type="term" value="C:cytoplasm"/>
    <property type="evidence" value="ECO:0007669"/>
    <property type="project" value="UniProtKB-KW"/>
</dbReference>
<dbReference type="GO" id="GO:0005874">
    <property type="term" value="C:microtubule"/>
    <property type="evidence" value="ECO:0007669"/>
    <property type="project" value="UniProtKB-KW"/>
</dbReference>
<dbReference type="GO" id="GO:0016363">
    <property type="term" value="C:nuclear matrix"/>
    <property type="evidence" value="ECO:0000314"/>
    <property type="project" value="UniProtKB"/>
</dbReference>
<dbReference type="GO" id="GO:0005524">
    <property type="term" value="F:ATP binding"/>
    <property type="evidence" value="ECO:0007669"/>
    <property type="project" value="UniProtKB-KW"/>
</dbReference>
<dbReference type="GO" id="GO:0016887">
    <property type="term" value="F:ATP hydrolysis activity"/>
    <property type="evidence" value="ECO:0007669"/>
    <property type="project" value="InterPro"/>
</dbReference>
<dbReference type="GO" id="GO:0051301">
    <property type="term" value="P:cell division"/>
    <property type="evidence" value="ECO:0007669"/>
    <property type="project" value="UniProtKB-KW"/>
</dbReference>
<dbReference type="CDD" id="cd19523">
    <property type="entry name" value="RecA-like_fidgetin"/>
    <property type="match status" value="1"/>
</dbReference>
<dbReference type="FunFam" id="1.10.8.60:FF:000022">
    <property type="entry name" value="Fidgetin like 1"/>
    <property type="match status" value="1"/>
</dbReference>
<dbReference type="FunFam" id="3.40.50.300:FF:000495">
    <property type="entry name" value="Fidgetin like 2"/>
    <property type="match status" value="1"/>
</dbReference>
<dbReference type="Gene3D" id="1.10.8.60">
    <property type="match status" value="1"/>
</dbReference>
<dbReference type="Gene3D" id="3.40.50.300">
    <property type="entry name" value="P-loop containing nucleotide triphosphate hydrolases"/>
    <property type="match status" value="1"/>
</dbReference>
<dbReference type="InterPro" id="IPR003593">
    <property type="entry name" value="AAA+_ATPase"/>
</dbReference>
<dbReference type="InterPro" id="IPR003959">
    <property type="entry name" value="ATPase_AAA_core"/>
</dbReference>
<dbReference type="InterPro" id="IPR003960">
    <property type="entry name" value="ATPase_AAA_CS"/>
</dbReference>
<dbReference type="InterPro" id="IPR047828">
    <property type="entry name" value="Fidgetin_ATPase"/>
</dbReference>
<dbReference type="InterPro" id="IPR050304">
    <property type="entry name" value="MT-severing_AAA_ATPase"/>
</dbReference>
<dbReference type="InterPro" id="IPR027417">
    <property type="entry name" value="P-loop_NTPase"/>
</dbReference>
<dbReference type="InterPro" id="IPR015415">
    <property type="entry name" value="Spast_Vps4_C"/>
</dbReference>
<dbReference type="PANTHER" id="PTHR23074">
    <property type="entry name" value="AAA DOMAIN-CONTAINING"/>
    <property type="match status" value="1"/>
</dbReference>
<dbReference type="PANTHER" id="PTHR23074:SF14">
    <property type="entry name" value="FIDGETIN"/>
    <property type="match status" value="1"/>
</dbReference>
<dbReference type="Pfam" id="PF00004">
    <property type="entry name" value="AAA"/>
    <property type="match status" value="1"/>
</dbReference>
<dbReference type="Pfam" id="PF09336">
    <property type="entry name" value="Vps4_C"/>
    <property type="match status" value="1"/>
</dbReference>
<dbReference type="SMART" id="SM00382">
    <property type="entry name" value="AAA"/>
    <property type="match status" value="1"/>
</dbReference>
<dbReference type="SUPFAM" id="SSF52540">
    <property type="entry name" value="P-loop containing nucleoside triphosphate hydrolases"/>
    <property type="match status" value="1"/>
</dbReference>
<dbReference type="PROSITE" id="PS00674">
    <property type="entry name" value="AAA"/>
    <property type="match status" value="1"/>
</dbReference>
<protein>
    <recommendedName>
        <fullName>Fidgetin</fullName>
    </recommendedName>
</protein>